<feature type="chain" id="PRO_0000231863" description="Homoserine O-acetyltransferase">
    <location>
        <begin position="1"/>
        <end position="359"/>
    </location>
</feature>
<feature type="domain" description="AB hydrolase-1" evidence="1">
    <location>
        <begin position="49"/>
        <end position="332"/>
    </location>
</feature>
<feature type="active site" description="Nucleophile" evidence="1">
    <location>
        <position position="143"/>
    </location>
</feature>
<feature type="active site" evidence="1">
    <location>
        <position position="299"/>
    </location>
</feature>
<feature type="active site" evidence="1">
    <location>
        <position position="328"/>
    </location>
</feature>
<feature type="binding site" evidence="1">
    <location>
        <position position="212"/>
    </location>
    <ligand>
        <name>substrate</name>
    </ligand>
</feature>
<feature type="binding site" evidence="1">
    <location>
        <position position="329"/>
    </location>
    <ligand>
        <name>substrate</name>
    </ligand>
</feature>
<comment type="function">
    <text evidence="1 2">Transfers an acetyl group from acetyl-CoA to L-homoserine, forming acetyl-L-homoserine.</text>
</comment>
<comment type="catalytic activity">
    <reaction evidence="1 2">
        <text>L-homoserine + acetyl-CoA = O-acetyl-L-homoserine + CoA</text>
        <dbReference type="Rhea" id="RHEA:13701"/>
        <dbReference type="ChEBI" id="CHEBI:57287"/>
        <dbReference type="ChEBI" id="CHEBI:57288"/>
        <dbReference type="ChEBI" id="CHEBI:57476"/>
        <dbReference type="ChEBI" id="CHEBI:57716"/>
        <dbReference type="EC" id="2.3.1.31"/>
    </reaction>
</comment>
<comment type="pathway">
    <text evidence="1">Amino-acid biosynthesis; L-methionine biosynthesis via de novo pathway; O-acetyl-L-homoserine from L-homoserine: step 1/1.</text>
</comment>
<comment type="subunit">
    <text evidence="1">Homodimer.</text>
</comment>
<comment type="subcellular location">
    <subcellularLocation>
        <location evidence="1">Cytoplasm</location>
    </subcellularLocation>
</comment>
<comment type="similarity">
    <text evidence="1">Belongs to the AB hydrolase superfamily. MetX family.</text>
</comment>
<accession>Q3M5Q6</accession>
<dbReference type="EC" id="2.3.1.31" evidence="1 2"/>
<dbReference type="EMBL" id="CP000117">
    <property type="protein sequence ID" value="ABA23680.1"/>
    <property type="molecule type" value="Genomic_DNA"/>
</dbReference>
<dbReference type="SMR" id="Q3M5Q6"/>
<dbReference type="STRING" id="240292.Ava_4076"/>
<dbReference type="ESTHER" id="anavt-metx">
    <property type="family name" value="Homoserine_transacetylase"/>
</dbReference>
<dbReference type="KEGG" id="ava:Ava_4076"/>
<dbReference type="eggNOG" id="COG2021">
    <property type="taxonomic scope" value="Bacteria"/>
</dbReference>
<dbReference type="HOGENOM" id="CLU_028760_1_2_3"/>
<dbReference type="UniPathway" id="UPA00051">
    <property type="reaction ID" value="UER00074"/>
</dbReference>
<dbReference type="Proteomes" id="UP000002533">
    <property type="component" value="Chromosome"/>
</dbReference>
<dbReference type="GO" id="GO:0005737">
    <property type="term" value="C:cytoplasm"/>
    <property type="evidence" value="ECO:0007669"/>
    <property type="project" value="UniProtKB-SubCell"/>
</dbReference>
<dbReference type="GO" id="GO:0004414">
    <property type="term" value="F:homoserine O-acetyltransferase activity"/>
    <property type="evidence" value="ECO:0007669"/>
    <property type="project" value="UniProtKB-UniRule"/>
</dbReference>
<dbReference type="GO" id="GO:0009092">
    <property type="term" value="P:homoserine metabolic process"/>
    <property type="evidence" value="ECO:0007669"/>
    <property type="project" value="TreeGrafter"/>
</dbReference>
<dbReference type="GO" id="GO:0009086">
    <property type="term" value="P:methionine biosynthetic process"/>
    <property type="evidence" value="ECO:0007669"/>
    <property type="project" value="UniProtKB-UniRule"/>
</dbReference>
<dbReference type="Gene3D" id="3.40.50.1820">
    <property type="entry name" value="alpha/beta hydrolase"/>
    <property type="match status" value="1"/>
</dbReference>
<dbReference type="HAMAP" id="MF_00296">
    <property type="entry name" value="MetX_acyltransf"/>
    <property type="match status" value="1"/>
</dbReference>
<dbReference type="InterPro" id="IPR000073">
    <property type="entry name" value="AB_hydrolase_1"/>
</dbReference>
<dbReference type="InterPro" id="IPR029058">
    <property type="entry name" value="AB_hydrolase_fold"/>
</dbReference>
<dbReference type="InterPro" id="IPR008220">
    <property type="entry name" value="HAT_MetX-like"/>
</dbReference>
<dbReference type="NCBIfam" id="TIGR01392">
    <property type="entry name" value="homoserO_Ac_trn"/>
    <property type="match status" value="1"/>
</dbReference>
<dbReference type="NCBIfam" id="NF001209">
    <property type="entry name" value="PRK00175.1"/>
    <property type="match status" value="1"/>
</dbReference>
<dbReference type="PANTHER" id="PTHR32268">
    <property type="entry name" value="HOMOSERINE O-ACETYLTRANSFERASE"/>
    <property type="match status" value="1"/>
</dbReference>
<dbReference type="PANTHER" id="PTHR32268:SF11">
    <property type="entry name" value="HOMOSERINE O-ACETYLTRANSFERASE"/>
    <property type="match status" value="1"/>
</dbReference>
<dbReference type="Pfam" id="PF00561">
    <property type="entry name" value="Abhydrolase_1"/>
    <property type="match status" value="1"/>
</dbReference>
<dbReference type="PIRSF" id="PIRSF000443">
    <property type="entry name" value="Homoser_Ac_trans"/>
    <property type="match status" value="1"/>
</dbReference>
<dbReference type="SUPFAM" id="SSF53474">
    <property type="entry name" value="alpha/beta-Hydrolases"/>
    <property type="match status" value="1"/>
</dbReference>
<sequence>MNYQDFISEQTEYYHLPVPFELEGGGVLTGVQVAYRTWGKLNSAGDNGVLICHALTGSADADEWWEGLLGANKALDSDRDFIICSNILGSCYGTTGATSINPQTGIPYGASFPAITIRDMVRLQAALIQHLGIKSLQLVIGGSLGGMQVLEWALLYPEIVQAIAPIATSGRHSAWCIGLSEAQRQAIYADPNWKGGNYTKEQPPSQGLAVARMMAMSAYRSWQSFTARFGRQYDAVADQFAIASYLQHHGQKLVQRFDANTYITLTQAMDSHDVAQGRDYKSVLQSIKQPALVVAIDSDILYPPTEQQELADFIPDAQLGWLQSSYGHDAFLIDIATLSQLVINFRQSLSLKTFSDVTT</sequence>
<name>METXA_TRIV2</name>
<gene>
    <name evidence="1 3" type="primary">metXA</name>
    <name type="ordered locus">Ava_4076</name>
</gene>
<keyword id="KW-0012">Acyltransferase</keyword>
<keyword id="KW-0028">Amino-acid biosynthesis</keyword>
<keyword id="KW-0963">Cytoplasm</keyword>
<keyword id="KW-0486">Methionine biosynthesis</keyword>
<keyword id="KW-0808">Transferase</keyword>
<reference key="1">
    <citation type="journal article" date="2014" name="Stand. Genomic Sci.">
        <title>Complete genome sequence of Anabaena variabilis ATCC 29413.</title>
        <authorList>
            <person name="Thiel T."/>
            <person name="Pratte B.S."/>
            <person name="Zhong J."/>
            <person name="Goodwin L."/>
            <person name="Copeland A."/>
            <person name="Lucas S."/>
            <person name="Han C."/>
            <person name="Pitluck S."/>
            <person name="Land M.L."/>
            <person name="Kyrpides N.C."/>
            <person name="Woyke T."/>
        </authorList>
    </citation>
    <scope>NUCLEOTIDE SEQUENCE [LARGE SCALE GENOMIC DNA]</scope>
    <source>
        <strain>ATCC 29413 / PCC 7937</strain>
    </source>
</reference>
<reference key="2">
    <citation type="journal article" date="2017" name="Nat. Chem. Biol.">
        <title>Parallel evolution of non-homologous isofunctional enzymes in methionine biosynthesis.</title>
        <authorList>
            <person name="Bastard K."/>
            <person name="Perret A."/>
            <person name="Mariage A."/>
            <person name="Bessonnet T."/>
            <person name="Pinet-Turpault A."/>
            <person name="Petit J.L."/>
            <person name="Darii E."/>
            <person name="Bazire P."/>
            <person name="Vergne-Vaxelaire C."/>
            <person name="Brewee C."/>
            <person name="Debard A."/>
            <person name="Pellouin V."/>
            <person name="Besnard-Gonnet M."/>
            <person name="Artiguenave F."/>
            <person name="Medigue C."/>
            <person name="Vallenet D."/>
            <person name="Danchin A."/>
            <person name="Zaparucha A."/>
            <person name="Weissenbach J."/>
            <person name="Salanoubat M."/>
            <person name="de Berardinis V."/>
        </authorList>
    </citation>
    <scope>FUNCTION</scope>
    <scope>CATALYTIC ACTIVITY</scope>
</reference>
<evidence type="ECO:0000255" key="1">
    <source>
        <dbReference type="HAMAP-Rule" id="MF_00296"/>
    </source>
</evidence>
<evidence type="ECO:0000269" key="2">
    <source>
    </source>
</evidence>
<evidence type="ECO:0000303" key="3">
    <source>
    </source>
</evidence>
<proteinExistence type="evidence at protein level"/>
<protein>
    <recommendedName>
        <fullName evidence="1">Homoserine O-acetyltransferase</fullName>
        <shortName evidence="1 3">HAT</shortName>
        <ecNumber evidence="1 2">2.3.1.31</ecNumber>
    </recommendedName>
    <alternativeName>
        <fullName evidence="1">Homoserine transacetylase</fullName>
        <shortName evidence="1">HTA</shortName>
    </alternativeName>
</protein>
<organism>
    <name type="scientific">Trichormus variabilis (strain ATCC 29413 / PCC 7937)</name>
    <name type="common">Anabaena variabilis</name>
    <dbReference type="NCBI Taxonomy" id="240292"/>
    <lineage>
        <taxon>Bacteria</taxon>
        <taxon>Bacillati</taxon>
        <taxon>Cyanobacteriota</taxon>
        <taxon>Cyanophyceae</taxon>
        <taxon>Nostocales</taxon>
        <taxon>Nostocaceae</taxon>
        <taxon>Trichormus</taxon>
    </lineage>
</organism>